<evidence type="ECO:0000255" key="1"/>
<evidence type="ECO:0000256" key="2">
    <source>
        <dbReference type="SAM" id="MobiDB-lite"/>
    </source>
</evidence>
<evidence type="ECO:0000303" key="3">
    <source>
    </source>
</evidence>
<evidence type="ECO:0000303" key="4">
    <source>
    </source>
</evidence>
<evidence type="ECO:0000303" key="5">
    <source>
    </source>
</evidence>
<evidence type="ECO:0000305" key="6"/>
<evidence type="ECO:0000312" key="7">
    <source>
        <dbReference type="HGNC" id="HGNC:19740"/>
    </source>
</evidence>
<reference key="1">
    <citation type="submission" date="2000-02" db="EMBL/GenBank/DDBJ databases">
        <title>Cloning, mapping and characterization of PCNXL1, a member of a new family of vertebrate homologs of the Drosophila neurogenic gene pecanex.</title>
        <authorList>
            <person name="Roux A.-F."/>
            <person name="Gasca S."/>
            <person name="Bagheri-Fam S."/>
            <person name="Saridaki A."/>
            <person name="Sanoudou D."/>
            <person name="Ferraz C."/>
            <person name="Demaille J."/>
            <person name="Ferguson-Smith M."/>
            <person name="Scherer G."/>
        </authorList>
    </citation>
    <scope>NUCLEOTIDE SEQUENCE [MRNA] (ISOFORM 1)</scope>
</reference>
<reference key="2">
    <citation type="journal article" date="1999" name="DNA Res.">
        <title>Prediction of the coding sequences of unidentified human genes. XIII. The complete sequences of 100 new cDNA clones from brain which code for large proteins in vitro.</title>
        <authorList>
            <person name="Nagase T."/>
            <person name="Ishikawa K."/>
            <person name="Suyama M."/>
            <person name="Kikuno R."/>
            <person name="Hirosawa M."/>
            <person name="Miyajima N."/>
            <person name="Tanaka A."/>
            <person name="Kotani H."/>
            <person name="Nomura N."/>
            <person name="Ohara O."/>
        </authorList>
    </citation>
    <scope>NUCLEOTIDE SEQUENCE [LARGE SCALE MRNA] (ISOFORM 2)</scope>
    <source>
        <tissue>Brain</tissue>
    </source>
</reference>
<reference key="3">
    <citation type="journal article" date="2003" name="Nature">
        <title>The DNA sequence and analysis of human chromosome 14.</title>
        <authorList>
            <person name="Heilig R."/>
            <person name="Eckenberg R."/>
            <person name="Petit J.-L."/>
            <person name="Fonknechten N."/>
            <person name="Da Silva C."/>
            <person name="Cattolico L."/>
            <person name="Levy M."/>
            <person name="Barbe V."/>
            <person name="De Berardinis V."/>
            <person name="Ureta-Vidal A."/>
            <person name="Pelletier E."/>
            <person name="Vico V."/>
            <person name="Anthouard V."/>
            <person name="Rowen L."/>
            <person name="Madan A."/>
            <person name="Qin S."/>
            <person name="Sun H."/>
            <person name="Du H."/>
            <person name="Pepin K."/>
            <person name="Artiguenave F."/>
            <person name="Robert C."/>
            <person name="Cruaud C."/>
            <person name="Bruels T."/>
            <person name="Jaillon O."/>
            <person name="Friedlander L."/>
            <person name="Samson G."/>
            <person name="Brottier P."/>
            <person name="Cure S."/>
            <person name="Segurens B."/>
            <person name="Aniere F."/>
            <person name="Samain S."/>
            <person name="Crespeau H."/>
            <person name="Abbasi N."/>
            <person name="Aiach N."/>
            <person name="Boscus D."/>
            <person name="Dickhoff R."/>
            <person name="Dors M."/>
            <person name="Dubois I."/>
            <person name="Friedman C."/>
            <person name="Gouyvenoux M."/>
            <person name="James R."/>
            <person name="Madan A."/>
            <person name="Mairey-Estrada B."/>
            <person name="Mangenot S."/>
            <person name="Martins N."/>
            <person name="Menard M."/>
            <person name="Oztas S."/>
            <person name="Ratcliffe A."/>
            <person name="Shaffer T."/>
            <person name="Trask B."/>
            <person name="Vacherie B."/>
            <person name="Bellemere C."/>
            <person name="Belser C."/>
            <person name="Besnard-Gonnet M."/>
            <person name="Bartol-Mavel D."/>
            <person name="Boutard M."/>
            <person name="Briez-Silla S."/>
            <person name="Combette S."/>
            <person name="Dufosse-Laurent V."/>
            <person name="Ferron C."/>
            <person name="Lechaplais C."/>
            <person name="Louesse C."/>
            <person name="Muselet D."/>
            <person name="Magdelenat G."/>
            <person name="Pateau E."/>
            <person name="Petit E."/>
            <person name="Sirvain-Trukniewicz P."/>
            <person name="Trybou A."/>
            <person name="Vega-Czarny N."/>
            <person name="Bataille E."/>
            <person name="Bluet E."/>
            <person name="Bordelais I."/>
            <person name="Dubois M."/>
            <person name="Dumont C."/>
            <person name="Guerin T."/>
            <person name="Haffray S."/>
            <person name="Hammadi R."/>
            <person name="Muanga J."/>
            <person name="Pellouin V."/>
            <person name="Robert D."/>
            <person name="Wunderle E."/>
            <person name="Gauguet G."/>
            <person name="Roy A."/>
            <person name="Sainte-Marthe L."/>
            <person name="Verdier J."/>
            <person name="Verdier-Discala C."/>
            <person name="Hillier L.W."/>
            <person name="Fulton L."/>
            <person name="McPherson J."/>
            <person name="Matsuda F."/>
            <person name="Wilson R."/>
            <person name="Scarpelli C."/>
            <person name="Gyapay G."/>
            <person name="Wincker P."/>
            <person name="Saurin W."/>
            <person name="Quetier F."/>
            <person name="Waterston R."/>
            <person name="Hood L."/>
            <person name="Weissenbach J."/>
        </authorList>
    </citation>
    <scope>NUCLEOTIDE SEQUENCE [LARGE SCALE GENOMIC DNA]</scope>
</reference>
<reference key="4">
    <citation type="journal article" date="2004" name="Genome Res.">
        <title>The status, quality, and expansion of the NIH full-length cDNA project: the Mammalian Gene Collection (MGC).</title>
        <authorList>
            <consortium name="The MGC Project Team"/>
        </authorList>
    </citation>
    <scope>NUCLEOTIDE SEQUENCE [LARGE SCALE MRNA] (ISOFORM 4)</scope>
    <scope>NUCLEOTIDE SEQUENCE [LARGE SCALE MRNA] OF 1803-2341 (ISOFORM 1/2)</scope>
    <source>
        <tissue>Brain</tissue>
        <tissue>Colon</tissue>
    </source>
</reference>
<reference key="5">
    <citation type="journal article" date="1998" name="DNA Res.">
        <title>Prediction of the coding sequences of unidentified human genes. XI. The complete sequences of 100 new cDNA clones from brain which code for large proteins in vitro.</title>
        <authorList>
            <person name="Nagase T."/>
            <person name="Ishikawa K."/>
            <person name="Suyama M."/>
            <person name="Kikuno R."/>
            <person name="Miyajima N."/>
            <person name="Tanaka A."/>
            <person name="Kotani H."/>
            <person name="Nomura N."/>
            <person name="Ohara O."/>
        </authorList>
    </citation>
    <scope>NUCLEOTIDE SEQUENCE [LARGE SCALE MRNA] OF 943-2341 (ISOFORM 3)</scope>
    <source>
        <tissue>Brain</tissue>
    </source>
</reference>
<reference key="6">
    <citation type="journal article" date="2002" name="DNA Res.">
        <title>Construction of expression-ready cDNA clones for KIAA genes: manual curation of 330 KIAA cDNA clones.</title>
        <authorList>
            <person name="Nakajima D."/>
            <person name="Okazaki N."/>
            <person name="Yamakawa H."/>
            <person name="Kikuno R."/>
            <person name="Ohara O."/>
            <person name="Nagase T."/>
        </authorList>
    </citation>
    <scope>SEQUENCE REVISION</scope>
</reference>
<reference key="7">
    <citation type="journal article" date="2008" name="Proc. Natl. Acad. Sci. U.S.A.">
        <title>A quantitative atlas of mitotic phosphorylation.</title>
        <authorList>
            <person name="Dephoure N."/>
            <person name="Zhou C."/>
            <person name="Villen J."/>
            <person name="Beausoleil S.A."/>
            <person name="Bakalarski C.E."/>
            <person name="Elledge S.J."/>
            <person name="Gygi S.P."/>
        </authorList>
    </citation>
    <scope>IDENTIFICATION BY MASS SPECTROMETRY [LARGE SCALE ANALYSIS]</scope>
    <source>
        <tissue>Cervix carcinoma</tissue>
    </source>
</reference>
<dbReference type="EMBL" id="AF233450">
    <property type="protein sequence ID" value="AAK82958.1"/>
    <property type="molecule type" value="mRNA"/>
</dbReference>
<dbReference type="EMBL" id="AB023212">
    <property type="protein sequence ID" value="BAA76839.1"/>
    <property type="status" value="ALT_FRAME"/>
    <property type="molecule type" value="mRNA"/>
</dbReference>
<dbReference type="EMBL" id="AC004825">
    <property type="status" value="NOT_ANNOTATED_CDS"/>
    <property type="molecule type" value="Genomic_DNA"/>
</dbReference>
<dbReference type="EMBL" id="AL445903">
    <property type="status" value="NOT_ANNOTATED_CDS"/>
    <property type="molecule type" value="Genomic_DNA"/>
</dbReference>
<dbReference type="EMBL" id="AC005230">
    <property type="status" value="NOT_ANNOTATED_CDS"/>
    <property type="molecule type" value="Genomic_DNA"/>
</dbReference>
<dbReference type="EMBL" id="AC004817">
    <property type="status" value="NOT_ANNOTATED_CDS"/>
    <property type="molecule type" value="Genomic_DNA"/>
</dbReference>
<dbReference type="EMBL" id="BC017076">
    <property type="protein sequence ID" value="AAH17076.2"/>
    <property type="molecule type" value="mRNA"/>
</dbReference>
<dbReference type="EMBL" id="BC140784">
    <property type="protein sequence ID" value="AAI40785.1"/>
    <property type="molecule type" value="mRNA"/>
</dbReference>
<dbReference type="EMBL" id="AB018348">
    <property type="protein sequence ID" value="BAA34525.1"/>
    <property type="molecule type" value="mRNA"/>
</dbReference>
<dbReference type="CCDS" id="CCDS76695.1">
    <molecule id="Q96RV3-4"/>
</dbReference>
<dbReference type="CCDS" id="CCDS9806.1">
    <molecule id="Q96RV3-1"/>
</dbReference>
<dbReference type="RefSeq" id="NP_001295089.1">
    <molecule id="Q96RV3-4"/>
    <property type="nucleotide sequence ID" value="NM_001308160.2"/>
</dbReference>
<dbReference type="RefSeq" id="NP_055797.2">
    <molecule id="Q96RV3-1"/>
    <property type="nucleotide sequence ID" value="NM_014982.3"/>
</dbReference>
<dbReference type="BioGRID" id="116638">
    <property type="interactions" value="15"/>
</dbReference>
<dbReference type="FunCoup" id="Q96RV3">
    <property type="interactions" value="2046"/>
</dbReference>
<dbReference type="IntAct" id="Q96RV3">
    <property type="interactions" value="6"/>
</dbReference>
<dbReference type="STRING" id="9606.ENSP00000304192"/>
<dbReference type="GlyCosmos" id="Q96RV3">
    <property type="glycosylation" value="20 sites, 1 glycan"/>
</dbReference>
<dbReference type="GlyGen" id="Q96RV3">
    <property type="glycosylation" value="21 sites, 2 N-linked glycans (2 sites), 1 O-linked glycan (4 sites)"/>
</dbReference>
<dbReference type="iPTMnet" id="Q96RV3"/>
<dbReference type="PhosphoSitePlus" id="Q96RV3"/>
<dbReference type="SwissPalm" id="Q96RV3"/>
<dbReference type="BioMuta" id="PCNX1"/>
<dbReference type="DMDM" id="116242705"/>
<dbReference type="jPOST" id="Q96RV3"/>
<dbReference type="MassIVE" id="Q96RV3"/>
<dbReference type="PaxDb" id="9606-ENSP00000304192"/>
<dbReference type="PeptideAtlas" id="Q96RV3"/>
<dbReference type="ProteomicsDB" id="3448"/>
<dbReference type="ProteomicsDB" id="78042">
    <molecule id="Q96RV3-1"/>
</dbReference>
<dbReference type="ProteomicsDB" id="78043">
    <molecule id="Q96RV3-2"/>
</dbReference>
<dbReference type="ProteomicsDB" id="78044">
    <molecule id="Q96RV3-3"/>
</dbReference>
<dbReference type="Antibodypedia" id="25184">
    <property type="antibodies" value="74 antibodies from 18 providers"/>
</dbReference>
<dbReference type="DNASU" id="22990"/>
<dbReference type="Ensembl" id="ENST00000304743.7">
    <molecule id="Q96RV3-1"/>
    <property type="protein sequence ID" value="ENSP00000304192.2"/>
    <property type="gene ID" value="ENSG00000100731.16"/>
</dbReference>
<dbReference type="Ensembl" id="ENST00000439984.7">
    <molecule id="Q96RV3-4"/>
    <property type="protein sequence ID" value="ENSP00000396617.3"/>
    <property type="gene ID" value="ENSG00000100731.16"/>
</dbReference>
<dbReference type="GeneID" id="22990"/>
<dbReference type="KEGG" id="hsa:22990"/>
<dbReference type="MANE-Select" id="ENST00000304743.7">
    <property type="protein sequence ID" value="ENSP00000304192.2"/>
    <property type="RefSeq nucleotide sequence ID" value="NM_014982.3"/>
    <property type="RefSeq protein sequence ID" value="NP_055797.2"/>
</dbReference>
<dbReference type="UCSC" id="uc001xmo.2">
    <molecule id="Q96RV3-1"/>
    <property type="organism name" value="human"/>
</dbReference>
<dbReference type="AGR" id="HGNC:19740"/>
<dbReference type="CTD" id="22990"/>
<dbReference type="DisGeNET" id="22990"/>
<dbReference type="GeneCards" id="PCNX1"/>
<dbReference type="HGNC" id="HGNC:19740">
    <property type="gene designation" value="PCNX1"/>
</dbReference>
<dbReference type="HPA" id="ENSG00000100731">
    <property type="expression patterns" value="Low tissue specificity"/>
</dbReference>
<dbReference type="MIM" id="617655">
    <property type="type" value="gene"/>
</dbReference>
<dbReference type="neXtProt" id="NX_Q96RV3"/>
<dbReference type="OpenTargets" id="ENSG00000100731"/>
<dbReference type="PharmGKB" id="PA134905848"/>
<dbReference type="VEuPathDB" id="HostDB:ENSG00000100731"/>
<dbReference type="eggNOG" id="KOG3604">
    <property type="taxonomic scope" value="Eukaryota"/>
</dbReference>
<dbReference type="GeneTree" id="ENSGT00940000157417"/>
<dbReference type="HOGENOM" id="CLU_000602_0_1_1"/>
<dbReference type="InParanoid" id="Q96RV3"/>
<dbReference type="OMA" id="ELXDTDS"/>
<dbReference type="OrthoDB" id="10037631at2759"/>
<dbReference type="PAN-GO" id="Q96RV3">
    <property type="GO annotations" value="0 GO annotations based on evolutionary models"/>
</dbReference>
<dbReference type="PhylomeDB" id="Q96RV3"/>
<dbReference type="TreeFam" id="TF313570"/>
<dbReference type="PathwayCommons" id="Q96RV3"/>
<dbReference type="SignaLink" id="Q96RV3"/>
<dbReference type="BioGRID-ORCS" id="22990">
    <property type="hits" value="11 hits in 1140 CRISPR screens"/>
</dbReference>
<dbReference type="ChiTaRS" id="PCNX1">
    <property type="organism name" value="human"/>
</dbReference>
<dbReference type="GeneWiki" id="PCNX"/>
<dbReference type="GenomeRNAi" id="22990"/>
<dbReference type="Pharos" id="Q96RV3">
    <property type="development level" value="Tbio"/>
</dbReference>
<dbReference type="PRO" id="PR:Q96RV3"/>
<dbReference type="Proteomes" id="UP000005640">
    <property type="component" value="Chromosome 14"/>
</dbReference>
<dbReference type="RNAct" id="Q96RV3">
    <property type="molecule type" value="protein"/>
</dbReference>
<dbReference type="Bgee" id="ENSG00000100731">
    <property type="expression patterns" value="Expressed in adrenal tissue and 195 other cell types or tissues"/>
</dbReference>
<dbReference type="ExpressionAtlas" id="Q96RV3">
    <property type="expression patterns" value="baseline and differential"/>
</dbReference>
<dbReference type="GO" id="GO:0016020">
    <property type="term" value="C:membrane"/>
    <property type="evidence" value="ECO:0007669"/>
    <property type="project" value="UniProtKB-SubCell"/>
</dbReference>
<dbReference type="InterPro" id="IPR039797">
    <property type="entry name" value="Pecanex"/>
</dbReference>
<dbReference type="InterPro" id="IPR007735">
    <property type="entry name" value="Pecanex_C"/>
</dbReference>
<dbReference type="PANTHER" id="PTHR12372">
    <property type="entry name" value="PECANEX"/>
    <property type="match status" value="1"/>
</dbReference>
<dbReference type="PANTHER" id="PTHR12372:SF2">
    <property type="entry name" value="PECANEX-LIKE PROTEIN 1"/>
    <property type="match status" value="1"/>
</dbReference>
<dbReference type="Pfam" id="PF05041">
    <property type="entry name" value="Pecanex_C"/>
    <property type="match status" value="1"/>
</dbReference>
<feature type="chain" id="PRO_0000215793" description="Pecanex-like protein 1">
    <location>
        <begin position="1"/>
        <end position="2341"/>
    </location>
</feature>
<feature type="transmembrane region" description="Helical" evidence="1">
    <location>
        <begin position="28"/>
        <end position="50"/>
    </location>
</feature>
<feature type="transmembrane region" description="Helical" evidence="1">
    <location>
        <begin position="57"/>
        <end position="74"/>
    </location>
</feature>
<feature type="transmembrane region" description="Helical" evidence="1">
    <location>
        <begin position="1003"/>
        <end position="1025"/>
    </location>
</feature>
<feature type="transmembrane region" description="Helical" evidence="1">
    <location>
        <begin position="1032"/>
        <end position="1049"/>
    </location>
</feature>
<feature type="transmembrane region" description="Helical" evidence="1">
    <location>
        <begin position="1067"/>
        <end position="1089"/>
    </location>
</feature>
<feature type="transmembrane region" description="Helical" evidence="1">
    <location>
        <begin position="1110"/>
        <end position="1132"/>
    </location>
</feature>
<feature type="transmembrane region" description="Helical" evidence="1">
    <location>
        <begin position="1160"/>
        <end position="1182"/>
    </location>
</feature>
<feature type="transmembrane region" description="Helical" evidence="1">
    <location>
        <begin position="1194"/>
        <end position="1213"/>
    </location>
</feature>
<feature type="transmembrane region" description="Helical" evidence="1">
    <location>
        <begin position="1266"/>
        <end position="1288"/>
    </location>
</feature>
<feature type="transmembrane region" description="Helical" evidence="1">
    <location>
        <begin position="1295"/>
        <end position="1312"/>
    </location>
</feature>
<feature type="region of interest" description="Disordered" evidence="2">
    <location>
        <begin position="98"/>
        <end position="163"/>
    </location>
</feature>
<feature type="region of interest" description="Disordered" evidence="2">
    <location>
        <begin position="270"/>
        <end position="294"/>
    </location>
</feature>
<feature type="region of interest" description="Disordered" evidence="2">
    <location>
        <begin position="311"/>
        <end position="331"/>
    </location>
</feature>
<feature type="region of interest" description="Disordered" evidence="2">
    <location>
        <begin position="344"/>
        <end position="689"/>
    </location>
</feature>
<feature type="region of interest" description="Disordered" evidence="2">
    <location>
        <begin position="756"/>
        <end position="834"/>
    </location>
</feature>
<feature type="region of interest" description="Disordered" evidence="2">
    <location>
        <begin position="2062"/>
        <end position="2120"/>
    </location>
</feature>
<feature type="region of interest" description="Disordered" evidence="2">
    <location>
        <begin position="2217"/>
        <end position="2237"/>
    </location>
</feature>
<feature type="compositionally biased region" description="Polar residues" evidence="2">
    <location>
        <begin position="143"/>
        <end position="163"/>
    </location>
</feature>
<feature type="compositionally biased region" description="Basic residues" evidence="2">
    <location>
        <begin position="272"/>
        <end position="282"/>
    </location>
</feature>
<feature type="compositionally biased region" description="Polar residues" evidence="2">
    <location>
        <begin position="320"/>
        <end position="331"/>
    </location>
</feature>
<feature type="compositionally biased region" description="Polar residues" evidence="2">
    <location>
        <begin position="347"/>
        <end position="356"/>
    </location>
</feature>
<feature type="compositionally biased region" description="Low complexity" evidence="2">
    <location>
        <begin position="370"/>
        <end position="388"/>
    </location>
</feature>
<feature type="compositionally biased region" description="Polar residues" evidence="2">
    <location>
        <begin position="394"/>
        <end position="404"/>
    </location>
</feature>
<feature type="compositionally biased region" description="Basic and acidic residues" evidence="2">
    <location>
        <begin position="430"/>
        <end position="455"/>
    </location>
</feature>
<feature type="compositionally biased region" description="Basic and acidic residues" evidence="2">
    <location>
        <begin position="465"/>
        <end position="478"/>
    </location>
</feature>
<feature type="compositionally biased region" description="Basic and acidic residues" evidence="2">
    <location>
        <begin position="527"/>
        <end position="544"/>
    </location>
</feature>
<feature type="compositionally biased region" description="Basic residues" evidence="2">
    <location>
        <begin position="554"/>
        <end position="569"/>
    </location>
</feature>
<feature type="compositionally biased region" description="Low complexity" evidence="2">
    <location>
        <begin position="605"/>
        <end position="635"/>
    </location>
</feature>
<feature type="compositionally biased region" description="Low complexity" evidence="2">
    <location>
        <begin position="814"/>
        <end position="832"/>
    </location>
</feature>
<feature type="compositionally biased region" description="Polar residues" evidence="2">
    <location>
        <begin position="2069"/>
        <end position="2078"/>
    </location>
</feature>
<feature type="compositionally biased region" description="Polar residues" evidence="2">
    <location>
        <begin position="2096"/>
        <end position="2114"/>
    </location>
</feature>
<feature type="compositionally biased region" description="Polar residues" evidence="2">
    <location>
        <begin position="2217"/>
        <end position="2236"/>
    </location>
</feature>
<feature type="glycosylation site" description="N-linked (GlcNAc...) asparagine" evidence="1">
    <location>
        <position position="109"/>
    </location>
</feature>
<feature type="glycosylation site" description="N-linked (GlcNAc...) asparagine" evidence="1">
    <location>
        <position position="215"/>
    </location>
</feature>
<feature type="glycosylation site" description="N-linked (GlcNAc...) asparagine" evidence="1">
    <location>
        <position position="348"/>
    </location>
</feature>
<feature type="glycosylation site" description="N-linked (GlcNAc...) asparagine" evidence="1">
    <location>
        <position position="394"/>
    </location>
</feature>
<feature type="glycosylation site" description="N-linked (GlcNAc...) asparagine" evidence="1">
    <location>
        <position position="702"/>
    </location>
</feature>
<feature type="glycosylation site" description="N-linked (GlcNAc...) asparagine" evidence="1">
    <location>
        <position position="852"/>
    </location>
</feature>
<feature type="glycosylation site" description="N-linked (GlcNAc...) asparagine" evidence="1">
    <location>
        <position position="863"/>
    </location>
</feature>
<feature type="glycosylation site" description="N-linked (GlcNAc...) asparagine" evidence="1">
    <location>
        <position position="1091"/>
    </location>
</feature>
<feature type="glycosylation site" description="N-linked (GlcNAc...) asparagine" evidence="1">
    <location>
        <position position="1155"/>
    </location>
</feature>
<feature type="glycosylation site" description="N-linked (GlcNAc...) asparagine" evidence="1">
    <location>
        <position position="1579"/>
    </location>
</feature>
<feature type="glycosylation site" description="N-linked (GlcNAc...) asparagine" evidence="1">
    <location>
        <position position="1720"/>
    </location>
</feature>
<feature type="glycosylation site" description="N-linked (GlcNAc...) asparagine" evidence="1">
    <location>
        <position position="1982"/>
    </location>
</feature>
<feature type="glycosylation site" description="N-linked (GlcNAc...) asparagine" evidence="1">
    <location>
        <position position="2062"/>
    </location>
</feature>
<feature type="glycosylation site" description="N-linked (GlcNAc...) asparagine" evidence="1">
    <location>
        <position position="2072"/>
    </location>
</feature>
<feature type="glycosylation site" description="N-linked (GlcNAc...) asparagine" evidence="1">
    <location>
        <position position="2234"/>
    </location>
</feature>
<feature type="glycosylation site" description="N-linked (GlcNAc...) asparagine" evidence="1">
    <location>
        <position position="2260"/>
    </location>
</feature>
<feature type="splice variant" id="VSP_054500" description="In isoform 4." evidence="4">
    <location>
        <begin position="771"/>
        <end position="876"/>
    </location>
</feature>
<feature type="splice variant" id="VSP_008401" description="In isoform 2." evidence="3">
    <original>RNGSVHLEASHDNASA</original>
    <variation>SSLLRCMRLVAVICHL</variation>
    <location>
        <begin position="851"/>
        <end position="866"/>
    </location>
</feature>
<feature type="splice variant" id="VSP_008402" description="In isoform 2." evidence="3">
    <location>
        <begin position="867"/>
        <end position="2341"/>
    </location>
</feature>
<feature type="splice variant" id="VSP_054501" description="In isoform 4." evidence="4">
    <location>
        <begin position="927"/>
        <end position="931"/>
    </location>
</feature>
<feature type="splice variant" id="VSP_008403" description="In isoform 3." evidence="5">
    <location>
        <begin position="1546"/>
        <end position="1617"/>
    </location>
</feature>
<feature type="sequence variant" id="VAR_050478" description="In dbSNP:rs34222509.">
    <original>A</original>
    <variation>T</variation>
    <location>
        <position position="594"/>
    </location>
</feature>
<feature type="sequence variant" id="VAR_028305" description="In dbSNP:rs11625687.">
    <original>L</original>
    <variation>I</variation>
    <location>
        <position position="809"/>
    </location>
</feature>
<feature type="sequence variant" id="VAR_028306" description="In dbSNP:rs11625690.">
    <original>L</original>
    <variation>I</variation>
    <location>
        <position position="814"/>
    </location>
</feature>
<feature type="sequence conflict" description="In Ref. 1; AAK82958 and 5; BAA34525." evidence="6" ref="1 5">
    <original>R</original>
    <variation>K</variation>
    <location>
        <position position="2239"/>
    </location>
</feature>
<proteinExistence type="evidence at protein level"/>
<keyword id="KW-0025">Alternative splicing</keyword>
<keyword id="KW-0325">Glycoprotein</keyword>
<keyword id="KW-0472">Membrane</keyword>
<keyword id="KW-1267">Proteomics identification</keyword>
<keyword id="KW-1185">Reference proteome</keyword>
<keyword id="KW-0812">Transmembrane</keyword>
<keyword id="KW-1133">Transmembrane helix</keyword>
<sequence>MGSQTLQILRQGVWAALSGGWYYDPHQATFVNALHLYLWLFLLGLPFTLYMALPSTMIIVAVYCPVIAAVFIVLKMVNYRLHRALDAGEVVDRTANEFTDQRTKAEQGNCSTRRKDSNGPSDPGGGIEMSEFIREATPPVGCSSRNSYAGLDPSNQIGSGSSRLGTAATIKGDTDTAKTSDDISLSLGQSSSLCKEGSEEQDLAADRKLFRLVSNDSFISIQPSLSSCGQDLPRDFSDKVNLPSHNHHHHVDQSLSSACDTEVASLVPLHSHSYRKDHRPRGVPRTSSSAVAFPDTSLNDFPLYQQRRGLDPVSELESSKPLSGSKESLVENSGLSGEFQLAGDLKINTSQPPTKSGKSKPLKAEKSMDSLRSLSTRSSGSTESYCSGTDRDTNSTVSSYKSEQTSSTHIESILSEHEESPKAGTKSGRKKECCAGPEEKNSCASDKRTSSEKIAMEASTNSGVHEAKDPTPSDEMHNQRGLSTSASEEANKNPHANEFTSQGDRPPGNTAENKEEKSDKSAVSVDSKVRKDVGGKQKEGDVRPKSSSVIHRTASAHKSGRRRTGKKRASSFDSSRHRDYVCFRGVSGTKPHSAIFCHDEDSSDQSDLSRASSVQSAHQFSSDSSSSTTSHSCQSPEGRYSALKTKHTHKERGTDSEHTHKAHLVPEGTSKKRATRRTSSTNSAKTRARVLSLDSGTVACLNDSNRLMAPESIKPLTTSKSDLEAKEGEVLDELSLLGRASQLETVTRSRNSLPNQVAFPEGEEQDAVSGAAQASEEAVSFRRERSTFRRQAVRRRHNAGSNPTPPTLLIGSPLSLQDGQQGQQSTAQVKVQSRPPSQAAVLSASASLLVRNGSVHLEASHDNASAVGGSSLHDELGKFSSTLYETGGCDMSLVNFEPAARRASNICDTDSHVSSSTSVRFYPHDVLSLPQIRLNRLLTIDTDLLEQQDIDLSPDLAATYGPTEEAAQKVKHYYRFWILPQLWIGINFDRLTLLALFDRNREILENVLAVILAILVAFLGSILLIQGFFRDIWVFQFCLVIASCQYSLLKSVQPDSSSPRHGHNRIIAYSRPVYFCICCGLIWLLDYGSRNLTATKFKLYGITFTNPLVFISARDLVIVFTLCFPIVFFIGLLPQVNTFVMYLCEQLDIHIFGGNATTSLLAALYSFICSIVAVALLYGLCYGALKDSWDGQHIPVLFSIFCGLLVAVSYHLSRQSSDPSVLFSLVQSKIFPKTEEKNPEDPLSEVKDPLPEKLRNSVSERLQSDLVVCIVIGVLYFAIHVSTVFTVLQPALKYVLYTLVGFVGFVTHYVLPQVRKQLPWHCFSHPLLKTLEYNQYEVRNAATMMWFEKLHVWLLFVEKNIIYPLIVLNELSSSAETIASPKKLNTELGALMITVAGLKLLRSSFSSPTYQYVTVIFTVLFFKFDYEAFSETMLLDLFFMSILFNKLWELLYKLQFVYTYIAPWQITWGSAFHAFAQPFAVPHSAMLFIQAAVSAFFSTPLNPFLGSAIFITSYVRPVKFWERDYNTKRVDHSNTRLASQLDRNPGSDDNNLNSIFYEHLTRSLQHSLCGDLLLGRWGNYSTGDCFILASDYLNALVHLIEIGNGLVTFQLRGLEFRGTYCQQREVEAITEGVEEDEGFCCCEPGHIPHMLSFNAAFSQRWLAWEVIVTKYILEGYSITDNSAASMLQVFDLRKVLTTYYVKGIIYYVTTSSKLEEWLANETMQEGLRLCADRNYVDVDPTFNPNIDEDYDHRLAGISRESFCVIYLNWIEYCSSRRAKPVDVDKDSSLVTLCYGLCVLGRRALGTASHHMSSNLESFLYGLHALFKGDFRISSIRDEWIFADMELLRKVVVPGIRMSIKLHQDHFTSPDEYDDPTVLYEAIVSHEKNLVIAHEGDPAWRSAVLANSPSLLALRHVMDDGTNEYKIIMLNRRYLSFRVIKVNKECVRGLWAGQQQELVFLRNRNPERGSIQNAKQALRNMINSSCDQPIGYPIFVSPLTTSYSDSHEQLKDILGGPISLGNIRNFIVSTWHRLRKGCGAGCNSGGNIEDSDTGGGTSCTGNNATTANNPHSNVTQGSIGNPGQGSGTGLHPPVTSYPPTLGTSHSSHSVQSGLVRQSPARASVASQSSYCYSSRHSSLRMSTTGFVPCRRSSTSQISLRNLPSSIQSRLSMVNQMEPSGQSGLACVQHGLPSSSSSSQSIPACKHHTLVGFLATEGGQSSATDAQPGNTLSPANNSHSRKAEVIYRVQIVDPSQILEGINLSKRKELQWPDEGIRLKAGRNSWKDWSPQEGMEGHVIHRWVPCSRDPGTRSHIDKAVLLVQIDDKYVTVIETGVLELGAEV</sequence>
<protein>
    <recommendedName>
        <fullName evidence="6">Pecanex-like protein 1</fullName>
    </recommendedName>
    <alternativeName>
        <fullName evidence="7">Pecanex homolog protein 1</fullName>
    </alternativeName>
</protein>
<comment type="subcellular location">
    <subcellularLocation>
        <location evidence="6">Membrane</location>
        <topology evidence="1">Multi-pass membrane protein</topology>
    </subcellularLocation>
</comment>
<comment type="alternative products">
    <event type="alternative splicing"/>
    <isoform>
        <id>Q96RV3-1</id>
        <name>1</name>
        <sequence type="displayed"/>
    </isoform>
    <isoform>
        <id>Q96RV3-2</id>
        <name>2</name>
        <sequence type="described" ref="VSP_008401 VSP_008402"/>
    </isoform>
    <isoform>
        <id>Q96RV3-3</id>
        <name>3</name>
        <sequence type="described" ref="VSP_008403"/>
    </isoform>
    <isoform>
        <id>Q96RV3-4</id>
        <name>4</name>
        <sequence type="described" ref="VSP_054500 VSP_054501"/>
    </isoform>
</comment>
<comment type="similarity">
    <text evidence="6">Belongs to the pecanex family.</text>
</comment>
<comment type="sequence caution" evidence="6">
    <conflict type="frameshift">
        <sequence resource="EMBL-CDS" id="BAA76839"/>
    </conflict>
</comment>
<organism>
    <name type="scientific">Homo sapiens</name>
    <name type="common">Human</name>
    <dbReference type="NCBI Taxonomy" id="9606"/>
    <lineage>
        <taxon>Eukaryota</taxon>
        <taxon>Metazoa</taxon>
        <taxon>Chordata</taxon>
        <taxon>Craniata</taxon>
        <taxon>Vertebrata</taxon>
        <taxon>Euteleostomi</taxon>
        <taxon>Mammalia</taxon>
        <taxon>Eutheria</taxon>
        <taxon>Euarchontoglires</taxon>
        <taxon>Primates</taxon>
        <taxon>Haplorrhini</taxon>
        <taxon>Catarrhini</taxon>
        <taxon>Hominidae</taxon>
        <taxon>Homo</taxon>
    </lineage>
</organism>
<name>PCX1_HUMAN</name>
<gene>
    <name evidence="7" type="primary">PCNX1</name>
    <name type="synonym">KIAA0805</name>
    <name type="synonym">KIAA0995</name>
    <name type="synonym">PCNX</name>
    <name type="synonym">PCNXL1</name>
</gene>
<accession>Q96RV3</accession>
<accession>B2RTR6</accession>
<accession>O94897</accession>
<accession>Q96AI7</accession>
<accession>Q9Y2J9</accession>